<dbReference type="EMBL" id="CR628336">
    <property type="protein sequence ID" value="CAH14230.1"/>
    <property type="molecule type" value="Genomic_DNA"/>
</dbReference>
<dbReference type="RefSeq" id="WP_010948689.1">
    <property type="nucleotide sequence ID" value="NC_006368.1"/>
</dbReference>
<dbReference type="SMR" id="Q5X0L9"/>
<dbReference type="GeneID" id="57037010"/>
<dbReference type="KEGG" id="lpp:lpp3077"/>
<dbReference type="LegioList" id="lpp3077"/>
<dbReference type="HOGENOM" id="CLU_129938_2_0_6"/>
<dbReference type="GO" id="GO:1990904">
    <property type="term" value="C:ribonucleoprotein complex"/>
    <property type="evidence" value="ECO:0007669"/>
    <property type="project" value="UniProtKB-KW"/>
</dbReference>
<dbReference type="GO" id="GO:0005840">
    <property type="term" value="C:ribosome"/>
    <property type="evidence" value="ECO:0007669"/>
    <property type="project" value="UniProtKB-KW"/>
</dbReference>
<dbReference type="GO" id="GO:0003735">
    <property type="term" value="F:structural constituent of ribosome"/>
    <property type="evidence" value="ECO:0007669"/>
    <property type="project" value="InterPro"/>
</dbReference>
<dbReference type="GO" id="GO:0006412">
    <property type="term" value="P:translation"/>
    <property type="evidence" value="ECO:0007669"/>
    <property type="project" value="UniProtKB-UniRule"/>
</dbReference>
<dbReference type="FunFam" id="1.10.287.3980:FF:000001">
    <property type="entry name" value="Mitochondrial ribosomal protein L34"/>
    <property type="match status" value="1"/>
</dbReference>
<dbReference type="Gene3D" id="1.10.287.3980">
    <property type="match status" value="1"/>
</dbReference>
<dbReference type="HAMAP" id="MF_00391">
    <property type="entry name" value="Ribosomal_bL34"/>
    <property type="match status" value="1"/>
</dbReference>
<dbReference type="InterPro" id="IPR000271">
    <property type="entry name" value="Ribosomal_bL34"/>
</dbReference>
<dbReference type="InterPro" id="IPR020939">
    <property type="entry name" value="Ribosomal_bL34_CS"/>
</dbReference>
<dbReference type="NCBIfam" id="TIGR01030">
    <property type="entry name" value="rpmH_bact"/>
    <property type="match status" value="1"/>
</dbReference>
<dbReference type="PANTHER" id="PTHR14503:SF4">
    <property type="entry name" value="LARGE RIBOSOMAL SUBUNIT PROTEIN BL34M"/>
    <property type="match status" value="1"/>
</dbReference>
<dbReference type="PANTHER" id="PTHR14503">
    <property type="entry name" value="MITOCHONDRIAL RIBOSOMAL PROTEIN 34 FAMILY MEMBER"/>
    <property type="match status" value="1"/>
</dbReference>
<dbReference type="Pfam" id="PF00468">
    <property type="entry name" value="Ribosomal_L34"/>
    <property type="match status" value="1"/>
</dbReference>
<dbReference type="PROSITE" id="PS00784">
    <property type="entry name" value="RIBOSOMAL_L34"/>
    <property type="match status" value="1"/>
</dbReference>
<keyword id="KW-0687">Ribonucleoprotein</keyword>
<keyword id="KW-0689">Ribosomal protein</keyword>
<organism>
    <name type="scientific">Legionella pneumophila (strain Paris)</name>
    <dbReference type="NCBI Taxonomy" id="297246"/>
    <lineage>
        <taxon>Bacteria</taxon>
        <taxon>Pseudomonadati</taxon>
        <taxon>Pseudomonadota</taxon>
        <taxon>Gammaproteobacteria</taxon>
        <taxon>Legionellales</taxon>
        <taxon>Legionellaceae</taxon>
        <taxon>Legionella</taxon>
    </lineage>
</organism>
<accession>Q5X0L9</accession>
<feature type="chain" id="PRO_0000187397" description="Large ribosomal subunit protein bL34">
    <location>
        <begin position="1"/>
        <end position="44"/>
    </location>
</feature>
<protein>
    <recommendedName>
        <fullName evidence="1">Large ribosomal subunit protein bL34</fullName>
    </recommendedName>
    <alternativeName>
        <fullName evidence="2">50S ribosomal protein L34</fullName>
    </alternativeName>
</protein>
<name>RL34_LEGPA</name>
<evidence type="ECO:0000255" key="1">
    <source>
        <dbReference type="HAMAP-Rule" id="MF_00391"/>
    </source>
</evidence>
<evidence type="ECO:0000305" key="2"/>
<reference key="1">
    <citation type="journal article" date="2004" name="Nat. Genet.">
        <title>Evidence in the Legionella pneumophila genome for exploitation of host cell functions and high genome plasticity.</title>
        <authorList>
            <person name="Cazalet C."/>
            <person name="Rusniok C."/>
            <person name="Brueggemann H."/>
            <person name="Zidane N."/>
            <person name="Magnier A."/>
            <person name="Ma L."/>
            <person name="Tichit M."/>
            <person name="Jarraud S."/>
            <person name="Bouchier C."/>
            <person name="Vandenesch F."/>
            <person name="Kunst F."/>
            <person name="Etienne J."/>
            <person name="Glaser P."/>
            <person name="Buchrieser C."/>
        </authorList>
    </citation>
    <scope>NUCLEOTIDE SEQUENCE [LARGE SCALE GENOMIC DNA]</scope>
    <source>
        <strain>Paris</strain>
    </source>
</reference>
<comment type="similarity">
    <text evidence="1">Belongs to the bacterial ribosomal protein bL34 family.</text>
</comment>
<gene>
    <name evidence="1" type="primary">rpmH</name>
    <name type="ordered locus">lpp3077</name>
</gene>
<proteinExistence type="inferred from homology"/>
<sequence length="44" mass="5322">MKRTFQPSNLKRKRDHGFRLRMSTRAGRLVIKRRRAKGRKRLSA</sequence>